<sequence length="379" mass="42493">MTNIRKSHPLMKIINDALVDLPAPSNISSWWNFGSLLGICLILQILTGLFLAMHYTPDTLTAFSSVTHICRDVNYGWAIRYMHANGASIFFICLFIHVGRGLYYGSYTFLETWNIGVILLLTTMATAFMGYVLPWGQMSFWGATVITNLLSAIPYIGTDLVEWIWGGFSVDKATLTRFFAFHFILPFIIMALAAVHLLFLHETGSNNPTGIPSNADKIPFHPYYTIKDILGVLLLMTMLLTLTLFAPDLLGDPDNYTPANPLSTPPHIKPEWYFLFAYAILRSIPNKLGGVLALVLSILILALIPMLHTSKQRSLMFRPLSQCLFWALIADLLTLTWIGGQPVEHPYIIIGQLASILYFLLILVLMPVAGIIENKLLKW</sequence>
<reference key="1">
    <citation type="journal article" date="1997" name="Mol. Biol. Evol.">
        <title>Phylogenetic relationships of artiodactyls and cetaceans as deduced from the comparison of cytochrome b and 12S rRNA mitochondrial sequences.</title>
        <authorList>
            <person name="Montgelard C."/>
            <person name="Catzeflis F.M."/>
            <person name="Douzery E.J.P."/>
        </authorList>
    </citation>
    <scope>NUCLEOTIDE SEQUENCE [GENOMIC DNA]</scope>
    <source>
        <strain>Isolate T-1683</strain>
        <tissue>Hair</tissue>
    </source>
</reference>
<comment type="function">
    <text evidence="2">Component of the ubiquinol-cytochrome c reductase complex (complex III or cytochrome b-c1 complex) that is part of the mitochondrial respiratory chain. The b-c1 complex mediates electron transfer from ubiquinol to cytochrome c. Contributes to the generation of a proton gradient across the mitochondrial membrane that is then used for ATP synthesis.</text>
</comment>
<comment type="cofactor">
    <cofactor evidence="2">
        <name>heme b</name>
        <dbReference type="ChEBI" id="CHEBI:60344"/>
    </cofactor>
    <text evidence="2">Binds 2 heme b groups non-covalently.</text>
</comment>
<comment type="subunit">
    <text evidence="2">The cytochrome bc1 complex contains 11 subunits: 3 respiratory subunits (MT-CYB, CYC1 and UQCRFS1), 2 core proteins (UQCRC1 and UQCRC2) and 6 low-molecular weight proteins (UQCRH/QCR6, UQCRB/QCR7, UQCRQ/QCR8, UQCR10/QCR9, UQCR11/QCR10 and a cleavage product of UQCRFS1). This cytochrome bc1 complex then forms a dimer.</text>
</comment>
<comment type="subcellular location">
    <subcellularLocation>
        <location evidence="2">Mitochondrion inner membrane</location>
        <topology evidence="2">Multi-pass membrane protein</topology>
    </subcellularLocation>
</comment>
<comment type="miscellaneous">
    <text evidence="1">Heme 1 (or BL or b562) is low-potential and absorbs at about 562 nm, and heme 2 (or BH or b566) is high-potential and absorbs at about 566 nm.</text>
</comment>
<comment type="similarity">
    <text evidence="3 4">Belongs to the cytochrome b family.</text>
</comment>
<comment type="caution">
    <text evidence="2">The full-length protein contains only eight transmembrane helices, not nine as predicted by bioinformatics tools.</text>
</comment>
<keyword id="KW-0249">Electron transport</keyword>
<keyword id="KW-0349">Heme</keyword>
<keyword id="KW-0408">Iron</keyword>
<keyword id="KW-0472">Membrane</keyword>
<keyword id="KW-0479">Metal-binding</keyword>
<keyword id="KW-0496">Mitochondrion</keyword>
<keyword id="KW-0999">Mitochondrion inner membrane</keyword>
<keyword id="KW-0679">Respiratory chain</keyword>
<keyword id="KW-0812">Transmembrane</keyword>
<keyword id="KW-1133">Transmembrane helix</keyword>
<keyword id="KW-0813">Transport</keyword>
<keyword id="KW-0830">Ubiquinone</keyword>
<name>CYB_HEXLI</name>
<feature type="chain" id="PRO_0000061037" description="Cytochrome b">
    <location>
        <begin position="1"/>
        <end position="379"/>
    </location>
</feature>
<feature type="transmembrane region" description="Helical" evidence="2">
    <location>
        <begin position="33"/>
        <end position="53"/>
    </location>
</feature>
<feature type="transmembrane region" description="Helical" evidence="2">
    <location>
        <begin position="77"/>
        <end position="98"/>
    </location>
</feature>
<feature type="transmembrane region" description="Helical" evidence="2">
    <location>
        <begin position="113"/>
        <end position="133"/>
    </location>
</feature>
<feature type="transmembrane region" description="Helical" evidence="2">
    <location>
        <begin position="178"/>
        <end position="198"/>
    </location>
</feature>
<feature type="transmembrane region" description="Helical" evidence="2">
    <location>
        <begin position="226"/>
        <end position="246"/>
    </location>
</feature>
<feature type="transmembrane region" description="Helical" evidence="2">
    <location>
        <begin position="288"/>
        <end position="308"/>
    </location>
</feature>
<feature type="transmembrane region" description="Helical" evidence="2">
    <location>
        <begin position="320"/>
        <end position="340"/>
    </location>
</feature>
<feature type="transmembrane region" description="Helical" evidence="2">
    <location>
        <begin position="347"/>
        <end position="367"/>
    </location>
</feature>
<feature type="binding site" description="axial binding residue" evidence="2">
    <location>
        <position position="83"/>
    </location>
    <ligand>
        <name>heme b</name>
        <dbReference type="ChEBI" id="CHEBI:60344"/>
        <label>b562</label>
    </ligand>
    <ligandPart>
        <name>Fe</name>
        <dbReference type="ChEBI" id="CHEBI:18248"/>
    </ligandPart>
</feature>
<feature type="binding site" description="axial binding residue" evidence="2">
    <location>
        <position position="97"/>
    </location>
    <ligand>
        <name>heme b</name>
        <dbReference type="ChEBI" id="CHEBI:60344"/>
        <label>b566</label>
    </ligand>
    <ligandPart>
        <name>Fe</name>
        <dbReference type="ChEBI" id="CHEBI:18248"/>
    </ligandPart>
</feature>
<feature type="binding site" description="axial binding residue" evidence="2">
    <location>
        <position position="182"/>
    </location>
    <ligand>
        <name>heme b</name>
        <dbReference type="ChEBI" id="CHEBI:60344"/>
        <label>b562</label>
    </ligand>
    <ligandPart>
        <name>Fe</name>
        <dbReference type="ChEBI" id="CHEBI:18248"/>
    </ligandPart>
</feature>
<feature type="binding site" description="axial binding residue" evidence="2">
    <location>
        <position position="196"/>
    </location>
    <ligand>
        <name>heme b</name>
        <dbReference type="ChEBI" id="CHEBI:60344"/>
        <label>b566</label>
    </ligand>
    <ligandPart>
        <name>Fe</name>
        <dbReference type="ChEBI" id="CHEBI:18248"/>
    </ligandPart>
</feature>
<feature type="binding site" evidence="2">
    <location>
        <position position="201"/>
    </location>
    <ligand>
        <name>a ubiquinone</name>
        <dbReference type="ChEBI" id="CHEBI:16389"/>
    </ligand>
</feature>
<organism>
    <name type="scientific">Hexaprotodon liberiensis</name>
    <name type="common">Pygmy hippopotamus</name>
    <name type="synonym">Choeropsis liberiensis</name>
    <dbReference type="NCBI Taxonomy" id="56798"/>
    <lineage>
        <taxon>Eukaryota</taxon>
        <taxon>Metazoa</taxon>
        <taxon>Chordata</taxon>
        <taxon>Craniata</taxon>
        <taxon>Vertebrata</taxon>
        <taxon>Euteleostomi</taxon>
        <taxon>Mammalia</taxon>
        <taxon>Eutheria</taxon>
        <taxon>Laurasiatheria</taxon>
        <taxon>Artiodactyla</taxon>
        <taxon>Whippomorpha</taxon>
        <taxon>Ancodonta</taxon>
        <taxon>Hippopotamidae</taxon>
        <taxon>Hexaprotodon</taxon>
    </lineage>
</organism>
<accession>O03363</accession>
<dbReference type="EMBL" id="Y08814">
    <property type="protein sequence ID" value="CAA70048.1"/>
    <property type="molecule type" value="Genomic_DNA"/>
</dbReference>
<dbReference type="RefSeq" id="YP_007626029.1">
    <property type="nucleotide sequence ID" value="NC_020697.1"/>
</dbReference>
<dbReference type="SMR" id="O03363"/>
<dbReference type="GeneID" id="14843259"/>
<dbReference type="CTD" id="4519"/>
<dbReference type="GO" id="GO:0005743">
    <property type="term" value="C:mitochondrial inner membrane"/>
    <property type="evidence" value="ECO:0007669"/>
    <property type="project" value="UniProtKB-SubCell"/>
</dbReference>
<dbReference type="GO" id="GO:0045275">
    <property type="term" value="C:respiratory chain complex III"/>
    <property type="evidence" value="ECO:0007669"/>
    <property type="project" value="InterPro"/>
</dbReference>
<dbReference type="GO" id="GO:0046872">
    <property type="term" value="F:metal ion binding"/>
    <property type="evidence" value="ECO:0007669"/>
    <property type="project" value="UniProtKB-KW"/>
</dbReference>
<dbReference type="GO" id="GO:0008121">
    <property type="term" value="F:ubiquinol-cytochrome-c reductase activity"/>
    <property type="evidence" value="ECO:0007669"/>
    <property type="project" value="InterPro"/>
</dbReference>
<dbReference type="GO" id="GO:0006122">
    <property type="term" value="P:mitochondrial electron transport, ubiquinol to cytochrome c"/>
    <property type="evidence" value="ECO:0007669"/>
    <property type="project" value="TreeGrafter"/>
</dbReference>
<dbReference type="CDD" id="cd00290">
    <property type="entry name" value="cytochrome_b_C"/>
    <property type="match status" value="1"/>
</dbReference>
<dbReference type="CDD" id="cd00284">
    <property type="entry name" value="Cytochrome_b_N"/>
    <property type="match status" value="1"/>
</dbReference>
<dbReference type="FunFam" id="1.20.810.10:FF:000002">
    <property type="entry name" value="Cytochrome b"/>
    <property type="match status" value="1"/>
</dbReference>
<dbReference type="Gene3D" id="1.20.810.10">
    <property type="entry name" value="Cytochrome Bc1 Complex, Chain C"/>
    <property type="match status" value="1"/>
</dbReference>
<dbReference type="InterPro" id="IPR005798">
    <property type="entry name" value="Cyt_b/b6_C"/>
</dbReference>
<dbReference type="InterPro" id="IPR036150">
    <property type="entry name" value="Cyt_b/b6_C_sf"/>
</dbReference>
<dbReference type="InterPro" id="IPR005797">
    <property type="entry name" value="Cyt_b/b6_N"/>
</dbReference>
<dbReference type="InterPro" id="IPR027387">
    <property type="entry name" value="Cytb/b6-like_sf"/>
</dbReference>
<dbReference type="InterPro" id="IPR030689">
    <property type="entry name" value="Cytochrome_b"/>
</dbReference>
<dbReference type="InterPro" id="IPR048260">
    <property type="entry name" value="Cytochrome_b_C_euk/bac"/>
</dbReference>
<dbReference type="InterPro" id="IPR048259">
    <property type="entry name" value="Cytochrome_b_N_euk/bac"/>
</dbReference>
<dbReference type="InterPro" id="IPR016174">
    <property type="entry name" value="Di-haem_cyt_TM"/>
</dbReference>
<dbReference type="PANTHER" id="PTHR19271">
    <property type="entry name" value="CYTOCHROME B"/>
    <property type="match status" value="1"/>
</dbReference>
<dbReference type="PANTHER" id="PTHR19271:SF16">
    <property type="entry name" value="CYTOCHROME B"/>
    <property type="match status" value="1"/>
</dbReference>
<dbReference type="Pfam" id="PF00032">
    <property type="entry name" value="Cytochrom_B_C"/>
    <property type="match status" value="1"/>
</dbReference>
<dbReference type="Pfam" id="PF00033">
    <property type="entry name" value="Cytochrome_B"/>
    <property type="match status" value="1"/>
</dbReference>
<dbReference type="PIRSF" id="PIRSF038885">
    <property type="entry name" value="COB"/>
    <property type="match status" value="1"/>
</dbReference>
<dbReference type="SUPFAM" id="SSF81648">
    <property type="entry name" value="a domain/subunit of cytochrome bc1 complex (Ubiquinol-cytochrome c reductase)"/>
    <property type="match status" value="1"/>
</dbReference>
<dbReference type="SUPFAM" id="SSF81342">
    <property type="entry name" value="Transmembrane di-heme cytochromes"/>
    <property type="match status" value="1"/>
</dbReference>
<dbReference type="PROSITE" id="PS51003">
    <property type="entry name" value="CYTB_CTER"/>
    <property type="match status" value="1"/>
</dbReference>
<dbReference type="PROSITE" id="PS51002">
    <property type="entry name" value="CYTB_NTER"/>
    <property type="match status" value="1"/>
</dbReference>
<gene>
    <name type="primary">MT-CYB</name>
    <name type="synonym">COB</name>
    <name type="synonym">CYTB</name>
    <name type="synonym">MTCYB</name>
</gene>
<geneLocation type="mitochondrion"/>
<proteinExistence type="inferred from homology"/>
<evidence type="ECO:0000250" key="1"/>
<evidence type="ECO:0000250" key="2">
    <source>
        <dbReference type="UniProtKB" id="P00157"/>
    </source>
</evidence>
<evidence type="ECO:0000255" key="3">
    <source>
        <dbReference type="PROSITE-ProRule" id="PRU00967"/>
    </source>
</evidence>
<evidence type="ECO:0000255" key="4">
    <source>
        <dbReference type="PROSITE-ProRule" id="PRU00968"/>
    </source>
</evidence>
<protein>
    <recommendedName>
        <fullName>Cytochrome b</fullName>
    </recommendedName>
    <alternativeName>
        <fullName>Complex III subunit 3</fullName>
    </alternativeName>
    <alternativeName>
        <fullName>Complex III subunit III</fullName>
    </alternativeName>
    <alternativeName>
        <fullName>Cytochrome b-c1 complex subunit 3</fullName>
    </alternativeName>
    <alternativeName>
        <fullName>Ubiquinol-cytochrome-c reductase complex cytochrome b subunit</fullName>
    </alternativeName>
</protein>